<organismHost>
    <name type="scientific">Elephas maximus</name>
    <name type="common">Indian elephant</name>
    <dbReference type="NCBI Taxonomy" id="9783"/>
</organismHost>
<organismHost>
    <name type="scientific">Loxodonta africana</name>
    <name type="common">African elephant</name>
    <dbReference type="NCBI Taxonomy" id="9785"/>
</organismHost>
<organismHost>
    <name type="scientific">Loxodonta cyclotis</name>
    <name type="common">African forest elephant</name>
    <dbReference type="NCBI Taxonomy" id="99490"/>
</organismHost>
<reference key="1">
    <citation type="journal article" date="2007" name="J. Virol.">
        <title>Identification of novel rodent herpesviruses, including the first gammaherpesvirus of Mus musculus.</title>
        <authorList>
            <person name="Ehlers B."/>
            <person name="Kuchler J."/>
            <person name="Yasmum N."/>
            <person name="Dural G."/>
            <person name="Voigt S."/>
            <person name="Schmidt-Chanasit J."/>
            <person name="Jakel T."/>
            <person name="Matuschka F.R."/>
            <person name="Richter D."/>
            <person name="Essbauer S."/>
            <person name="Hughes D.J."/>
            <person name="Summers C."/>
            <person name="Bennett M."/>
            <person name="Stewart J.P."/>
            <person name="Ulrich R.G."/>
        </authorList>
    </citation>
    <scope>NUCLEOTIDE SEQUENCE [GENOMIC DNA]</scope>
</reference>
<reference key="2">
    <citation type="journal article" date="2001" name="J. Gen. Virol.">
        <title>Genetic and ultrastructural characterization of a European isolate of the fatal endotheliotropic elephant herpesvirus.</title>
        <authorList>
            <person name="Ehlers B."/>
            <person name="Burkhardt S."/>
            <person name="Goltz M."/>
            <person name="Bergmann V."/>
            <person name="Ochs A."/>
            <person name="Weiler H."/>
            <person name="Hentschke J."/>
        </authorList>
    </citation>
    <scope>NUCLEOTIDE SEQUENCE [GENOMIC DNA]</scope>
</reference>
<dbReference type="EMBL" id="AF322977">
    <property type="protein sequence ID" value="ABG36565.1"/>
    <property type="molecule type" value="Genomic_DNA"/>
</dbReference>
<dbReference type="RefSeq" id="YP_007969822.1">
    <property type="nucleotide sequence ID" value="NC_020474.2"/>
</dbReference>
<dbReference type="SMR" id="Q18LF4"/>
<dbReference type="GeneID" id="15486246"/>
<dbReference type="KEGG" id="vg:15486246"/>
<sequence length="581" mass="67733">MEYYDTDSEDEDEPCSPTVTSVFSANNRLSCSSLKNEKTPLTTVFTKKWLVKSIPMPSDYKRGIYAEDGPYDEVTYVLSGSNFTFTEKSAYVLDIDGLVTFTNLKHKVVRNKRKTIRRAITYVPGDVLMRKHKSIVRVLTCDGVLFIKGLSFASDAALWHVLCSFLNDRPNPHYLCYCTFKTFANILLTLEYRCRVNRALILVNKLLAVGYYLVGNFNYVSPQCSLLGYLGDVLTAQVVAWSRLSQIAITSDSRKIREAFTCMKHLLTVSWLTHERTDLSSDSIYKTLLAHEHIIAGIFCKCDTCRPPPAAINHNTALRVKNWHENNKNRLATDPNLQFRTRWNIEVNGGPELPRLFHSINFPTMYRGILRDRYLRQFYKFQNMVRFHVLTHTCSLQADELLFFQWWNEFMFMYFLRLYLSKCVKSDYTQAVNMFTYYLKAFRLVVCDIARGKCVNPSISELCEKVAHIVDHLVEDTSMASLLREICNFNRIIRDPKHAWIFPHYLRDDTGLQGKVLLEHILRDKFLSLRLDDPLLEHVGLLRSKILNESVKITFNEFTLRQLERSMWLENLLENHRSRLY</sequence>
<protein>
    <recommendedName>
        <fullName>Protein ORF B</fullName>
    </recommendedName>
</protein>
<feature type="chain" id="PRO_0000408182" description="Protein ORF B">
    <location>
        <begin position="1"/>
        <end position="581"/>
    </location>
</feature>
<organism>
    <name type="scientific">Elephantid herpesvirus 1 (isolate Asian elephant/Berlin/Kiba/1998)</name>
    <name type="common">EIHV-1</name>
    <name type="synonym">Elephant endotheliotropic herpesvirus</name>
    <dbReference type="NCBI Taxonomy" id="654902"/>
    <lineage>
        <taxon>Viruses</taxon>
        <taxon>Duplodnaviria</taxon>
        <taxon>Heunggongvirae</taxon>
        <taxon>Peploviricota</taxon>
        <taxon>Herviviricetes</taxon>
        <taxon>Herpesvirales</taxon>
        <taxon>Orthoherpesviridae</taxon>
        <taxon>Betaherpesvirinae</taxon>
        <taxon>Proboscivirus</taxon>
        <taxon>Proboscivirus elephantidbeta1</taxon>
        <taxon>Elephantid herpesvirus 1</taxon>
    </lineage>
</organism>
<proteinExistence type="predicted"/>
<name>ORFB_ELHVK</name>
<accession>Q18LF4</accession>